<gene>
    <name type="primary">isdG</name>
    <name type="ordered locus">SACOL1146</name>
</gene>
<protein>
    <recommendedName>
        <fullName evidence="1">Heme oxygenase (staphylobilin-producing) 1</fullName>
        <ecNumber evidence="1">1.14.99.48</ecNumber>
    </recommendedName>
    <alternativeName>
        <fullName evidence="1">Heme-degrading monooxygenase 1</fullName>
    </alternativeName>
    <alternativeName>
        <fullName evidence="1">Iron-regulated surface determinant 1</fullName>
    </alternativeName>
    <alternativeName>
        <fullName evidence="1">Iron-responsive surface determinant 1</fullName>
    </alternativeName>
</protein>
<feature type="chain" id="PRO_0000270081" description="Heme oxygenase (staphylobilin-producing) 1">
    <location>
        <begin position="1"/>
        <end position="107"/>
    </location>
</feature>
<feature type="domain" description="ABM" evidence="1">
    <location>
        <begin position="3"/>
        <end position="92"/>
    </location>
</feature>
<feature type="binding site" evidence="1">
    <location>
        <position position="7"/>
    </location>
    <ligand>
        <name>Fe cation</name>
        <dbReference type="ChEBI" id="CHEBI:24875"/>
    </ligand>
</feature>
<feature type="binding site" evidence="1">
    <location>
        <begin position="22"/>
        <end position="29"/>
    </location>
    <ligand>
        <name>heme</name>
        <dbReference type="ChEBI" id="CHEBI:30413"/>
    </ligand>
</feature>
<feature type="binding site" description="axial binding residue" evidence="1">
    <location>
        <position position="77"/>
    </location>
    <ligand>
        <name>heme</name>
        <dbReference type="ChEBI" id="CHEBI:30413"/>
    </ligand>
    <ligandPart>
        <name>Fe</name>
        <dbReference type="ChEBI" id="CHEBI:18248"/>
    </ligandPart>
</feature>
<feature type="site" description="Transition state stabilizer" evidence="1">
    <location>
        <position position="67"/>
    </location>
</feature>
<keyword id="KW-0963">Cytoplasm</keyword>
<keyword id="KW-0349">Heme</keyword>
<keyword id="KW-0408">Iron</keyword>
<keyword id="KW-0479">Metal-binding</keyword>
<keyword id="KW-0503">Monooxygenase</keyword>
<keyword id="KW-0560">Oxidoreductase</keyword>
<accession>Q5HGU8</accession>
<comment type="function">
    <text evidence="1">Allows bacterial pathogens to use the host heme as an iron source. Catalyzes the oxidative degradation of the heme macrocyclic porphyrin ring to the oxo-bilirubin chromophore staphylobilin (a mixture of the linear tetrapyrroles 5-oxo-delta-bilirubin and 15-oxo-beta-bilirubin) in the presence of a suitable electron donor such as ascorbate or NADPH--cytochrome P450 reductase, with subsequent release of free iron.</text>
</comment>
<comment type="catalytic activity">
    <reaction evidence="1">
        <text>heme b + 5 AH2 + 4 O2 + 2 H(+) = delta-staphylobilin + Fe(2+) + formaldehyde + 5 A + 4 H2O</text>
        <dbReference type="Rhea" id="RHEA:37039"/>
        <dbReference type="ChEBI" id="CHEBI:13193"/>
        <dbReference type="ChEBI" id="CHEBI:15377"/>
        <dbReference type="ChEBI" id="CHEBI:15378"/>
        <dbReference type="ChEBI" id="CHEBI:15379"/>
        <dbReference type="ChEBI" id="CHEBI:16842"/>
        <dbReference type="ChEBI" id="CHEBI:17499"/>
        <dbReference type="ChEBI" id="CHEBI:29033"/>
        <dbReference type="ChEBI" id="CHEBI:60344"/>
        <dbReference type="ChEBI" id="CHEBI:74361"/>
        <dbReference type="EC" id="1.14.99.48"/>
    </reaction>
</comment>
<comment type="catalytic activity">
    <reaction evidence="1">
        <text>heme b + 5 AH2 + 4 O2 + 2 H(+) = beta-staphylobilin + Fe(2+) + formaldehyde + 5 A + 4 H2O</text>
        <dbReference type="Rhea" id="RHEA:37363"/>
        <dbReference type="ChEBI" id="CHEBI:13193"/>
        <dbReference type="ChEBI" id="CHEBI:15377"/>
        <dbReference type="ChEBI" id="CHEBI:15378"/>
        <dbReference type="ChEBI" id="CHEBI:15379"/>
        <dbReference type="ChEBI" id="CHEBI:16842"/>
        <dbReference type="ChEBI" id="CHEBI:17499"/>
        <dbReference type="ChEBI" id="CHEBI:29033"/>
        <dbReference type="ChEBI" id="CHEBI:60344"/>
        <dbReference type="ChEBI" id="CHEBI:74362"/>
        <dbReference type="EC" id="1.14.99.48"/>
    </reaction>
</comment>
<comment type="subunit">
    <text evidence="1">Homodimer.</text>
</comment>
<comment type="subcellular location">
    <subcellularLocation>
        <location evidence="1">Cytoplasm</location>
    </subcellularLocation>
</comment>
<comment type="similarity">
    <text evidence="1">Belongs to the antibiotic biosynthesis monooxygenase family. Heme-degrading monooxygenase IsdG subfamily.</text>
</comment>
<reference key="1">
    <citation type="journal article" date="2005" name="J. Bacteriol.">
        <title>Insights on evolution of virulence and resistance from the complete genome analysis of an early methicillin-resistant Staphylococcus aureus strain and a biofilm-producing methicillin-resistant Staphylococcus epidermidis strain.</title>
        <authorList>
            <person name="Gill S.R."/>
            <person name="Fouts D.E."/>
            <person name="Archer G.L."/>
            <person name="Mongodin E.F."/>
            <person name="DeBoy R.T."/>
            <person name="Ravel J."/>
            <person name="Paulsen I.T."/>
            <person name="Kolonay J.F."/>
            <person name="Brinkac L.M."/>
            <person name="Beanan M.J."/>
            <person name="Dodson R.J."/>
            <person name="Daugherty S.C."/>
            <person name="Madupu R."/>
            <person name="Angiuoli S.V."/>
            <person name="Durkin A.S."/>
            <person name="Haft D.H."/>
            <person name="Vamathevan J.J."/>
            <person name="Khouri H."/>
            <person name="Utterback T.R."/>
            <person name="Lee C."/>
            <person name="Dimitrov G."/>
            <person name="Jiang L."/>
            <person name="Qin H."/>
            <person name="Weidman J."/>
            <person name="Tran K."/>
            <person name="Kang K.H."/>
            <person name="Hance I.R."/>
            <person name="Nelson K.E."/>
            <person name="Fraser C.M."/>
        </authorList>
    </citation>
    <scope>NUCLEOTIDE SEQUENCE [LARGE SCALE GENOMIC DNA]</scope>
    <source>
        <strain>COL</strain>
    </source>
</reference>
<organism>
    <name type="scientific">Staphylococcus aureus (strain COL)</name>
    <dbReference type="NCBI Taxonomy" id="93062"/>
    <lineage>
        <taxon>Bacteria</taxon>
        <taxon>Bacillati</taxon>
        <taxon>Bacillota</taxon>
        <taxon>Bacilli</taxon>
        <taxon>Bacillales</taxon>
        <taxon>Staphylococcaceae</taxon>
        <taxon>Staphylococcus</taxon>
    </lineage>
</organism>
<evidence type="ECO:0000255" key="1">
    <source>
        <dbReference type="HAMAP-Rule" id="MF_01272"/>
    </source>
</evidence>
<dbReference type="EC" id="1.14.99.48" evidence="1"/>
<dbReference type="EMBL" id="CP000046">
    <property type="protein sequence ID" value="AAW38025.1"/>
    <property type="molecule type" value="Genomic_DNA"/>
</dbReference>
<dbReference type="RefSeq" id="WP_000670950.1">
    <property type="nucleotide sequence ID" value="NZ_JBGOFO010000002.1"/>
</dbReference>
<dbReference type="SMR" id="Q5HGU8"/>
<dbReference type="KEGG" id="sac:SACOL1146"/>
<dbReference type="HOGENOM" id="CLU_141544_2_1_9"/>
<dbReference type="Proteomes" id="UP000000530">
    <property type="component" value="Chromosome"/>
</dbReference>
<dbReference type="GO" id="GO:0005737">
    <property type="term" value="C:cytoplasm"/>
    <property type="evidence" value="ECO:0007669"/>
    <property type="project" value="UniProtKB-SubCell"/>
</dbReference>
<dbReference type="GO" id="GO:0020037">
    <property type="term" value="F:heme binding"/>
    <property type="evidence" value="ECO:0007669"/>
    <property type="project" value="UniProtKB-UniRule"/>
</dbReference>
<dbReference type="GO" id="GO:0004392">
    <property type="term" value="F:heme oxygenase (decyclizing) activity"/>
    <property type="evidence" value="ECO:0007669"/>
    <property type="project" value="UniProtKB-UniRule"/>
</dbReference>
<dbReference type="GO" id="GO:0005506">
    <property type="term" value="F:iron ion binding"/>
    <property type="evidence" value="ECO:0007669"/>
    <property type="project" value="UniProtKB-UniRule"/>
</dbReference>
<dbReference type="GO" id="GO:0042167">
    <property type="term" value="P:heme catabolic process"/>
    <property type="evidence" value="ECO:0007669"/>
    <property type="project" value="UniProtKB-UniRule"/>
</dbReference>
<dbReference type="GO" id="GO:0033212">
    <property type="term" value="P:iron import into cell"/>
    <property type="evidence" value="ECO:0007669"/>
    <property type="project" value="InterPro"/>
</dbReference>
<dbReference type="Gene3D" id="3.30.70.100">
    <property type="match status" value="1"/>
</dbReference>
<dbReference type="HAMAP" id="MF_01272">
    <property type="entry name" value="Heme_degrading_monooxygenase"/>
    <property type="match status" value="1"/>
</dbReference>
<dbReference type="InterPro" id="IPR007138">
    <property type="entry name" value="ABM_dom"/>
</dbReference>
<dbReference type="InterPro" id="IPR011008">
    <property type="entry name" value="Dimeric_a/b-barrel"/>
</dbReference>
<dbReference type="InterPro" id="IPR050404">
    <property type="entry name" value="Heme-degrading_MO"/>
</dbReference>
<dbReference type="InterPro" id="IPR023953">
    <property type="entry name" value="IsdG"/>
</dbReference>
<dbReference type="NCBIfam" id="NF009837">
    <property type="entry name" value="PRK13312.1"/>
    <property type="match status" value="1"/>
</dbReference>
<dbReference type="PANTHER" id="PTHR34474:SF4">
    <property type="entry name" value="HEME OXYGENASE (STAPHYLOBILIN-PRODUCING) 1"/>
    <property type="match status" value="1"/>
</dbReference>
<dbReference type="PANTHER" id="PTHR34474">
    <property type="entry name" value="SIGNAL TRANSDUCTION PROTEIN TRAP"/>
    <property type="match status" value="1"/>
</dbReference>
<dbReference type="Pfam" id="PF03992">
    <property type="entry name" value="ABM"/>
    <property type="match status" value="1"/>
</dbReference>
<dbReference type="SUPFAM" id="SSF54909">
    <property type="entry name" value="Dimeric alpha+beta barrel"/>
    <property type="match status" value="1"/>
</dbReference>
<dbReference type="PROSITE" id="PS51725">
    <property type="entry name" value="ABM"/>
    <property type="match status" value="1"/>
</dbReference>
<name>HDOX1_STAAC</name>
<sequence>MKFMAENRLTLTKGTAKDIIERFYTRHGIETLEGFDGMFVTQTLEQEDFDEVKILTVWKSKQAFTDWLKSDVFKAAHKHVRSKNEDESSPIINNKVITYDIGYSYMK</sequence>
<proteinExistence type="inferred from homology"/>